<name>RS13_CHLSY</name>
<comment type="function">
    <text evidence="1">Located at the top of the head of the 30S subunit, it contacts several helices of the 16S rRNA. In the 70S ribosome it contacts the 23S rRNA (bridge B1a) and protein L5 of the 50S subunit (bridge B1b), connecting the 2 subunits; these bridges are implicated in subunit movement. Contacts the tRNAs in the A and P-sites.</text>
</comment>
<comment type="subunit">
    <text evidence="1">Part of the 30S ribosomal subunit. Forms a loose heterodimer with protein S19. Forms two bridges to the 50S subunit in the 70S ribosome.</text>
</comment>
<comment type="similarity">
    <text evidence="1">Belongs to the universal ribosomal protein uS13 family.</text>
</comment>
<dbReference type="EMBL" id="CP001364">
    <property type="protein sequence ID" value="ACM53972.1"/>
    <property type="molecule type" value="Genomic_DNA"/>
</dbReference>
<dbReference type="SMR" id="B9LJF6"/>
<dbReference type="KEGG" id="chl:Chy400_2580"/>
<dbReference type="HOGENOM" id="CLU_103849_1_2_0"/>
<dbReference type="OrthoDB" id="9803610at2"/>
<dbReference type="GO" id="GO:0005829">
    <property type="term" value="C:cytosol"/>
    <property type="evidence" value="ECO:0007669"/>
    <property type="project" value="TreeGrafter"/>
</dbReference>
<dbReference type="GO" id="GO:0015935">
    <property type="term" value="C:small ribosomal subunit"/>
    <property type="evidence" value="ECO:0007669"/>
    <property type="project" value="TreeGrafter"/>
</dbReference>
<dbReference type="GO" id="GO:0019843">
    <property type="term" value="F:rRNA binding"/>
    <property type="evidence" value="ECO:0007669"/>
    <property type="project" value="UniProtKB-UniRule"/>
</dbReference>
<dbReference type="GO" id="GO:0003735">
    <property type="term" value="F:structural constituent of ribosome"/>
    <property type="evidence" value="ECO:0007669"/>
    <property type="project" value="InterPro"/>
</dbReference>
<dbReference type="GO" id="GO:0000049">
    <property type="term" value="F:tRNA binding"/>
    <property type="evidence" value="ECO:0007669"/>
    <property type="project" value="UniProtKB-UniRule"/>
</dbReference>
<dbReference type="GO" id="GO:0006412">
    <property type="term" value="P:translation"/>
    <property type="evidence" value="ECO:0007669"/>
    <property type="project" value="UniProtKB-UniRule"/>
</dbReference>
<dbReference type="FunFam" id="1.10.8.50:FF:000001">
    <property type="entry name" value="30S ribosomal protein S13"/>
    <property type="match status" value="1"/>
</dbReference>
<dbReference type="FunFam" id="4.10.910.10:FF:000001">
    <property type="entry name" value="30S ribosomal protein S13"/>
    <property type="match status" value="1"/>
</dbReference>
<dbReference type="Gene3D" id="1.10.8.50">
    <property type="match status" value="1"/>
</dbReference>
<dbReference type="Gene3D" id="4.10.910.10">
    <property type="entry name" value="30s ribosomal protein s13, domain 2"/>
    <property type="match status" value="1"/>
</dbReference>
<dbReference type="HAMAP" id="MF_01315">
    <property type="entry name" value="Ribosomal_uS13"/>
    <property type="match status" value="1"/>
</dbReference>
<dbReference type="InterPro" id="IPR027437">
    <property type="entry name" value="Rbsml_uS13_C"/>
</dbReference>
<dbReference type="InterPro" id="IPR001892">
    <property type="entry name" value="Ribosomal_uS13"/>
</dbReference>
<dbReference type="InterPro" id="IPR010979">
    <property type="entry name" value="Ribosomal_uS13-like_H2TH"/>
</dbReference>
<dbReference type="InterPro" id="IPR019980">
    <property type="entry name" value="Ribosomal_uS13_bac-type"/>
</dbReference>
<dbReference type="InterPro" id="IPR018269">
    <property type="entry name" value="Ribosomal_uS13_CS"/>
</dbReference>
<dbReference type="NCBIfam" id="TIGR03631">
    <property type="entry name" value="uS13_bact"/>
    <property type="match status" value="1"/>
</dbReference>
<dbReference type="PANTHER" id="PTHR10871">
    <property type="entry name" value="30S RIBOSOMAL PROTEIN S13/40S RIBOSOMAL PROTEIN S18"/>
    <property type="match status" value="1"/>
</dbReference>
<dbReference type="PANTHER" id="PTHR10871:SF1">
    <property type="entry name" value="SMALL RIBOSOMAL SUBUNIT PROTEIN US13M"/>
    <property type="match status" value="1"/>
</dbReference>
<dbReference type="Pfam" id="PF00416">
    <property type="entry name" value="Ribosomal_S13"/>
    <property type="match status" value="1"/>
</dbReference>
<dbReference type="PIRSF" id="PIRSF002134">
    <property type="entry name" value="Ribosomal_S13"/>
    <property type="match status" value="1"/>
</dbReference>
<dbReference type="SUPFAM" id="SSF46946">
    <property type="entry name" value="S13-like H2TH domain"/>
    <property type="match status" value="1"/>
</dbReference>
<dbReference type="PROSITE" id="PS00646">
    <property type="entry name" value="RIBOSOMAL_S13_1"/>
    <property type="match status" value="1"/>
</dbReference>
<dbReference type="PROSITE" id="PS50159">
    <property type="entry name" value="RIBOSOMAL_S13_2"/>
    <property type="match status" value="1"/>
</dbReference>
<gene>
    <name evidence="1" type="primary">rpsM</name>
    <name type="ordered locus">Chy400_2580</name>
</gene>
<protein>
    <recommendedName>
        <fullName evidence="1">Small ribosomal subunit protein uS13</fullName>
    </recommendedName>
    <alternativeName>
        <fullName evidence="3">30S ribosomal protein S13</fullName>
    </alternativeName>
</protein>
<reference key="1">
    <citation type="submission" date="2009-01" db="EMBL/GenBank/DDBJ databases">
        <title>Complete sequence of Chloroflexus sp. Y-400-fl.</title>
        <authorList>
            <consortium name="US DOE Joint Genome Institute"/>
            <person name="Lucas S."/>
            <person name="Copeland A."/>
            <person name="Lapidus A."/>
            <person name="Glavina del Rio T."/>
            <person name="Dalin E."/>
            <person name="Tice H."/>
            <person name="Bruce D."/>
            <person name="Goodwin L."/>
            <person name="Pitluck S."/>
            <person name="Sims D."/>
            <person name="Kiss H."/>
            <person name="Brettin T."/>
            <person name="Detter J.C."/>
            <person name="Han C."/>
            <person name="Larimer F."/>
            <person name="Land M."/>
            <person name="Hauser L."/>
            <person name="Kyrpides N."/>
            <person name="Ovchinnikova G."/>
            <person name="Bryant D.A."/>
            <person name="Richardson P."/>
        </authorList>
    </citation>
    <scope>NUCLEOTIDE SEQUENCE [LARGE SCALE GENOMIC DNA]</scope>
    <source>
        <strain>ATCC 29364 / DSM 637 / Y-400-fl</strain>
    </source>
</reference>
<evidence type="ECO:0000255" key="1">
    <source>
        <dbReference type="HAMAP-Rule" id="MF_01315"/>
    </source>
</evidence>
<evidence type="ECO:0000256" key="2">
    <source>
        <dbReference type="SAM" id="MobiDB-lite"/>
    </source>
</evidence>
<evidence type="ECO:0000305" key="3"/>
<accession>B9LJF6</accession>
<organism>
    <name type="scientific">Chloroflexus aurantiacus (strain ATCC 29364 / DSM 637 / Y-400-fl)</name>
    <dbReference type="NCBI Taxonomy" id="480224"/>
    <lineage>
        <taxon>Bacteria</taxon>
        <taxon>Bacillati</taxon>
        <taxon>Chloroflexota</taxon>
        <taxon>Chloroflexia</taxon>
        <taxon>Chloroflexales</taxon>
        <taxon>Chloroflexineae</taxon>
        <taxon>Chloroflexaceae</taxon>
        <taxon>Chloroflexus</taxon>
    </lineage>
</organism>
<proteinExistence type="inferred from homology"/>
<sequence length="127" mass="14866">MARIAGVDIPRNKKIEIAITYIYGIGRSNGMEILRKANVNPERRVRDLTEEEVGRIREIVDREYRVEGDLRREVQLNIKRLMDIGCYRGLRHRRGMPVRGQRTRTNARTRRGRRGQAIGIKKKATKK</sequence>
<keyword id="KW-0687">Ribonucleoprotein</keyword>
<keyword id="KW-0689">Ribosomal protein</keyword>
<keyword id="KW-0694">RNA-binding</keyword>
<keyword id="KW-0699">rRNA-binding</keyword>
<keyword id="KW-0820">tRNA-binding</keyword>
<feature type="chain" id="PRO_1000165611" description="Small ribosomal subunit protein uS13">
    <location>
        <begin position="1"/>
        <end position="127"/>
    </location>
</feature>
<feature type="region of interest" description="Disordered" evidence="2">
    <location>
        <begin position="93"/>
        <end position="127"/>
    </location>
</feature>